<reference key="1">
    <citation type="journal article" date="2004" name="Mol. Biol. Evol.">
        <title>Rhesus macaque class I duplicon structures, organization, and evolution within the alpha block of the major histocompatibility complex.</title>
        <authorList>
            <person name="Kulski J.K."/>
            <person name="Anzai T."/>
            <person name="Shiina T."/>
            <person name="Inoko H."/>
        </authorList>
    </citation>
    <scope>NUCLEOTIDE SEQUENCE [LARGE SCALE GENOMIC DNA]</scope>
</reference>
<reference key="2">
    <citation type="journal article" date="2003" name="Cell">
        <title>Species-specific exclusion of APOBEC3G from HIV-1 virions by Vif.</title>
        <authorList>
            <person name="Mariani R."/>
            <person name="Chen D."/>
            <person name="Schroefelbauer B."/>
            <person name="Navarro F."/>
            <person name="Koenig R."/>
            <person name="Bollman B."/>
            <person name="Muenk C."/>
            <person name="Nymark-McMahon H."/>
            <person name="Landau N.R."/>
        </authorList>
    </citation>
    <scope>NUCLEOTIDE SEQUENCE [MRNA] OF 9-377</scope>
    <scope>FUNCTION IN DNA C TO U EDITING</scope>
    <scope>CATALYTIC ACTIVITY</scope>
    <scope>SPECIES-SPECIFIC RESTRICTION TO HIV-8 INFECTION</scope>
</reference>
<reference key="3">
    <citation type="journal article" date="2008" name="Annu. Rev. Immunol.">
        <title>The APOBEC3 cytidine deaminases: an innate defensive network opposing exogenous retroviruses and endogenous retroelements.</title>
        <authorList>
            <person name="Chiu Y.L."/>
            <person name="Greene W.C."/>
        </authorList>
    </citation>
    <scope>REVIEW</scope>
</reference>
<reference key="4">
    <citation type="journal article" date="2011" name="J. Virol.">
        <title>Human and rhesus APOBEC3D, APOBEC3F, APOBEC3G, and APOBEC3H demonstrate a conserved capacity to restrict Vif-deficient HIV-1.</title>
        <authorList>
            <person name="Hultquist J.F."/>
            <person name="Lengyel J.A."/>
            <person name="Refsland E.W."/>
            <person name="LaRue R.S."/>
            <person name="Lackey L."/>
            <person name="Brown W.L."/>
            <person name="Harris R.S."/>
        </authorList>
    </citation>
    <scope>FUNCTION IN HIV-8 RESTRICTION</scope>
    <scope>SUBCELLULAR LOCATION</scope>
    <scope>ACTIVITY REGULATION</scope>
</reference>
<reference evidence="10" key="5">
    <citation type="journal article" date="2023" name="Sci. Adv.">
        <title>Structural basis for HIV-1 antagonism of host APOBEC3G via Cullin E3 ligase.</title>
        <authorList>
            <person name="Ito F."/>
            <person name="Alvarez-Cabrera A.L."/>
            <person name="Liu S."/>
            <person name="Yang H."/>
            <person name="Shiriaeva A."/>
            <person name="Zhou Z.H."/>
            <person name="Chen X.S."/>
        </authorList>
    </citation>
    <scope>STRUCTURE BY ELECTRON MICROSCOPY (3.57 ANGSTROMS) IN COMPLEX WITH ZINC; CBFB AND HIV-8 VIF</scope>
    <scope>COFACTOR</scope>
    <scope>ACTIVITY REGULATION (MICROBIAL INFECTION)</scope>
    <scope>UBIQUITINATION AT LYS-270 AND LYS-333 (MICROBIAL INFECTION)</scope>
    <scope>MUTAGENESIS OF LYS-128; LYS-270 AND LYS-333</scope>
</reference>
<proteinExistence type="evidence at protein level"/>
<accession>Q7YR23</accession>
<organism>
    <name type="scientific">Macaca mulatta</name>
    <name type="common">Rhesus macaque</name>
    <dbReference type="NCBI Taxonomy" id="9544"/>
    <lineage>
        <taxon>Eukaryota</taxon>
        <taxon>Metazoa</taxon>
        <taxon>Chordata</taxon>
        <taxon>Craniata</taxon>
        <taxon>Vertebrata</taxon>
        <taxon>Euteleostomi</taxon>
        <taxon>Mammalia</taxon>
        <taxon>Eutheria</taxon>
        <taxon>Euarchontoglires</taxon>
        <taxon>Primates</taxon>
        <taxon>Haplorrhini</taxon>
        <taxon>Catarrhini</taxon>
        <taxon>Cercopithecidae</taxon>
        <taxon>Cercopithecinae</taxon>
        <taxon>Macaca</taxon>
    </lineage>
</organism>
<evidence type="ECO:0000250" key="1">
    <source>
        <dbReference type="UniProtKB" id="Q9HC16"/>
    </source>
</evidence>
<evidence type="ECO:0000255" key="2">
    <source>
        <dbReference type="PROSITE-ProRule" id="PRU01083"/>
    </source>
</evidence>
<evidence type="ECO:0000269" key="3">
    <source>
    </source>
</evidence>
<evidence type="ECO:0000269" key="4">
    <source>
    </source>
</evidence>
<evidence type="ECO:0000269" key="5">
    <source>
    </source>
</evidence>
<evidence type="ECO:0000303" key="6">
    <source>
    </source>
</evidence>
<evidence type="ECO:0000303" key="7">
    <source>
    </source>
</evidence>
<evidence type="ECO:0000305" key="8"/>
<evidence type="ECO:0000305" key="9">
    <source>
    </source>
</evidence>
<evidence type="ECO:0007744" key="10">
    <source>
        <dbReference type="PDB" id="8E40"/>
    </source>
</evidence>
<evidence type="ECO:0007829" key="11">
    <source>
        <dbReference type="PDB" id="8EDJ"/>
    </source>
</evidence>
<dbReference type="EC" id="3.5.4.38" evidence="3"/>
<dbReference type="EMBL" id="AY331716">
    <property type="protein sequence ID" value="AAP85256.1"/>
    <property type="molecule type" value="mRNA"/>
</dbReference>
<dbReference type="PDB" id="8E40">
    <property type="method" value="EM"/>
    <property type="resolution" value="3.57 A"/>
    <property type="chains" value="A=8-377"/>
</dbReference>
<dbReference type="PDB" id="8EDJ">
    <property type="method" value="X-ray"/>
    <property type="resolution" value="1.83 A"/>
    <property type="chains" value="A=8-377"/>
</dbReference>
<dbReference type="PDB" id="8TVC">
    <property type="method" value="X-ray"/>
    <property type="resolution" value="1.93 A"/>
    <property type="chains" value="A=1-380"/>
</dbReference>
<dbReference type="PDB" id="8TX4">
    <property type="method" value="X-ray"/>
    <property type="resolution" value="1.90 A"/>
    <property type="chains" value="A=1-380"/>
</dbReference>
<dbReference type="PDBsum" id="8E40"/>
<dbReference type="PDBsum" id="8EDJ"/>
<dbReference type="PDBsum" id="8TVC"/>
<dbReference type="PDBsum" id="8TX4"/>
<dbReference type="EMDB" id="EMD-27875"/>
<dbReference type="SMR" id="Q7YR23"/>
<dbReference type="FunCoup" id="Q7YR23">
    <property type="interactions" value="66"/>
</dbReference>
<dbReference type="STRING" id="9544.ENSMMUP00000069989"/>
<dbReference type="PaxDb" id="9544-ENSMMUP00000005357"/>
<dbReference type="eggNOG" id="KOG4075">
    <property type="taxonomic scope" value="Eukaryota"/>
</dbReference>
<dbReference type="InParanoid" id="Q7YR23"/>
<dbReference type="Proteomes" id="UP000006718">
    <property type="component" value="Unassembled WGS sequence"/>
</dbReference>
<dbReference type="GO" id="GO:0005737">
    <property type="term" value="C:cytoplasm"/>
    <property type="evidence" value="ECO:0000314"/>
    <property type="project" value="UniProtKB"/>
</dbReference>
<dbReference type="GO" id="GO:0005634">
    <property type="term" value="C:nucleus"/>
    <property type="evidence" value="ECO:0000318"/>
    <property type="project" value="GO_Central"/>
</dbReference>
<dbReference type="GO" id="GO:0000932">
    <property type="term" value="C:P-body"/>
    <property type="evidence" value="ECO:0000250"/>
    <property type="project" value="UniProtKB"/>
</dbReference>
<dbReference type="GO" id="GO:1990904">
    <property type="term" value="C:ribonucleoprotein complex"/>
    <property type="evidence" value="ECO:0000250"/>
    <property type="project" value="UniProtKB"/>
</dbReference>
<dbReference type="GO" id="GO:0004126">
    <property type="term" value="F:cytidine deaminase activity"/>
    <property type="evidence" value="ECO:0000250"/>
    <property type="project" value="UniProtKB"/>
</dbReference>
<dbReference type="GO" id="GO:0003723">
    <property type="term" value="F:RNA binding"/>
    <property type="evidence" value="ECO:0000318"/>
    <property type="project" value="GO_Central"/>
</dbReference>
<dbReference type="GO" id="GO:0008270">
    <property type="term" value="F:zinc ion binding"/>
    <property type="evidence" value="ECO:0007669"/>
    <property type="project" value="InterPro"/>
</dbReference>
<dbReference type="GO" id="GO:0009972">
    <property type="term" value="P:cytidine deamination"/>
    <property type="evidence" value="ECO:0000250"/>
    <property type="project" value="UniProtKB"/>
</dbReference>
<dbReference type="GO" id="GO:0016554">
    <property type="term" value="P:cytidine to uridine editing"/>
    <property type="evidence" value="ECO:0000318"/>
    <property type="project" value="GO_Central"/>
</dbReference>
<dbReference type="GO" id="GO:0051607">
    <property type="term" value="P:defense response to virus"/>
    <property type="evidence" value="ECO:0000314"/>
    <property type="project" value="UniProtKB"/>
</dbReference>
<dbReference type="GO" id="GO:0070383">
    <property type="term" value="P:DNA cytosine deamination"/>
    <property type="evidence" value="ECO:0000318"/>
    <property type="project" value="GO_Central"/>
</dbReference>
<dbReference type="GO" id="GO:0045087">
    <property type="term" value="P:innate immune response"/>
    <property type="evidence" value="ECO:0007669"/>
    <property type="project" value="UniProtKB-KW"/>
</dbReference>
<dbReference type="GO" id="GO:0045869">
    <property type="term" value="P:negative regulation of single stranded viral RNA replication via double stranded DNA intermediate"/>
    <property type="evidence" value="ECO:0000314"/>
    <property type="project" value="UniProtKB"/>
</dbReference>
<dbReference type="GO" id="GO:0010526">
    <property type="term" value="P:transposable element silencing"/>
    <property type="evidence" value="ECO:0000250"/>
    <property type="project" value="UniProtKB"/>
</dbReference>
<dbReference type="CDD" id="cd01283">
    <property type="entry name" value="cytidine_deaminase"/>
    <property type="match status" value="2"/>
</dbReference>
<dbReference type="FunFam" id="3.40.140.10:FF:000029">
    <property type="entry name" value="DNA dC-&gt;dU-editing enzyme APOBEC-3G"/>
    <property type="match status" value="2"/>
</dbReference>
<dbReference type="Gene3D" id="3.40.140.10">
    <property type="entry name" value="Cytidine Deaminase, domain 2"/>
    <property type="match status" value="2"/>
</dbReference>
<dbReference type="InterPro" id="IPR016192">
    <property type="entry name" value="APOBEC/CMP_deaminase_Zn-bd"/>
</dbReference>
<dbReference type="InterPro" id="IPR050610">
    <property type="entry name" value="APOBEC_Cyt_Deaminase"/>
</dbReference>
<dbReference type="InterPro" id="IPR002125">
    <property type="entry name" value="CMP_dCMP_dom"/>
</dbReference>
<dbReference type="InterPro" id="IPR016193">
    <property type="entry name" value="Cytidine_deaminase-like"/>
</dbReference>
<dbReference type="PANTHER" id="PTHR13857:SF20">
    <property type="entry name" value="DNA DC-DU-EDITING ENZYME APOBEC-3G"/>
    <property type="match status" value="1"/>
</dbReference>
<dbReference type="PANTHER" id="PTHR13857">
    <property type="entry name" value="MRNA EDITING ENZYME"/>
    <property type="match status" value="1"/>
</dbReference>
<dbReference type="Pfam" id="PF18782">
    <property type="entry name" value="NAD2"/>
    <property type="match status" value="2"/>
</dbReference>
<dbReference type="SUPFAM" id="SSF53927">
    <property type="entry name" value="Cytidine deaminase-like"/>
    <property type="match status" value="2"/>
</dbReference>
<dbReference type="PROSITE" id="PS00903">
    <property type="entry name" value="CYT_DCMP_DEAMINASES_1"/>
    <property type="match status" value="1"/>
</dbReference>
<dbReference type="PROSITE" id="PS51747">
    <property type="entry name" value="CYT_DCMP_DEAMINASES_2"/>
    <property type="match status" value="2"/>
</dbReference>
<gene>
    <name evidence="6" type="primary">APOBEC3G</name>
</gene>
<name>ABC3G_MACMU</name>
<keyword id="KW-0002">3D-structure</keyword>
<keyword id="KW-0051">Antiviral defense</keyword>
<keyword id="KW-0963">Cytoplasm</keyword>
<keyword id="KW-0378">Hydrolase</keyword>
<keyword id="KW-0391">Immunity</keyword>
<keyword id="KW-0399">Innate immunity</keyword>
<keyword id="KW-1017">Isopeptide bond</keyword>
<keyword id="KW-0479">Metal-binding</keyword>
<keyword id="KW-0539">Nucleus</keyword>
<keyword id="KW-0597">Phosphoprotein</keyword>
<keyword id="KW-1185">Reference proteome</keyword>
<keyword id="KW-0677">Repeat</keyword>
<keyword id="KW-0832">Ubl conjugation</keyword>
<keyword id="KW-0862">Zinc</keyword>
<comment type="function">
    <text evidence="3 4 7">DNA deaminase (cytidine deaminase) which acts as an inhibitor of retrovirus replication and retrotransposon mobility via deaminase-dependent and -independent mechanisms. Exhibits antiviral activity against vif-deficient: HIV-1 and simian immunodeficiency viruses (SIVs). After the penetration of retroviral nucleocapsids into target cells of infection and the initiation of reverse transcription, it can induce the conversion of cytosine to uracil in the minus-sense single-strand viral DNA, leading to G-to-A hypermutations in the subsequent plus-strand viral DNA. The resultant detrimental levels of mutations in the proviral genome, along with a deamination-independent mechanism that works prior to the proviral integration, together exert efficient antiretroviral effects in infected target cells. Selectively targets single-stranded DNA and does not deaminate double-stranded DNA or single- or double-stranded RNA. May inhibit the mobility of LTR retrotransposons.</text>
</comment>
<comment type="catalytic activity">
    <reaction evidence="3">
        <text>a 2'-deoxycytidine in single-stranded DNA + H2O + H(+) = a 2'-deoxyuridine in single-stranded DNA + NH4(+)</text>
        <dbReference type="Rhea" id="RHEA:50948"/>
        <dbReference type="Rhea" id="RHEA-COMP:12846"/>
        <dbReference type="Rhea" id="RHEA-COMP:12847"/>
        <dbReference type="ChEBI" id="CHEBI:15377"/>
        <dbReference type="ChEBI" id="CHEBI:15378"/>
        <dbReference type="ChEBI" id="CHEBI:28938"/>
        <dbReference type="ChEBI" id="CHEBI:85452"/>
        <dbReference type="ChEBI" id="CHEBI:133902"/>
        <dbReference type="EC" id="3.5.4.38"/>
    </reaction>
</comment>
<comment type="cofactor">
    <cofactor evidence="5">
        <name>Zn(2+)</name>
        <dbReference type="ChEBI" id="CHEBI:29105"/>
    </cofactor>
</comment>
<comment type="activity regulation">
    <text evidence="4 5">(Microbial infection) Antiviral activity is neutralized by the SIV (SIV-mac) virion infectivity factor (VIF), that prevents its incorporation into progeny virions by both inhibiting its translation and/or by inducing its ubiquitination and subsequent degradation by the 26S proteasome.</text>
</comment>
<comment type="subunit">
    <text evidence="1">Homodimer. Homooligomer. Can bind RNA to form ribonucleoprotein complexes of high-molecular-mass (HMM) or low-molecular-mass (LMM). HMM is inactive and heterogeneous in protein composition because of binding nonselectively to cellular RNAs, which in turn are associated with variety of cellular proteins. The LMM form which is enzymatically active has few or no RNAs associated. Its ability to form homooligomer is distinct from its ability to assemble into HMM. Interacts with APOBEC3B, APOBEC3F, MOV10, AGO2, EIF4E, EIF4ENIF1, DCP2 and DDX6 in an RNA-dependent manner. Interacts with AGO1, AGO3 and PKA/PRKACA (By similarity).</text>
</comment>
<comment type="subcellular location">
    <subcellularLocation>
        <location evidence="4">Cytoplasm</location>
    </subcellularLocation>
    <subcellularLocation>
        <location evidence="1">Nucleus</location>
    </subcellularLocation>
    <subcellularLocation>
        <location evidence="1">Cytoplasm</location>
        <location evidence="1">P-body</location>
    </subcellularLocation>
    <text evidence="1">Mainly cytoplasmic, small amount are found in the nucleus.</text>
</comment>
<comment type="domain">
    <text evidence="1">The CMP/dCMP deaminase domain 1 mediates RNA binding, RNA-dependent oligomerization and virion incorporation whereas the CMP/dCMP deaminase domain 2 confers deoxycytidine deaminase activity and substrate sequence specificity.</text>
</comment>
<comment type="PTM">
    <text evidence="9">(Microbial infection) Following infection by simian immunodeficiency virus (SIV), ubiquitinated by a cullin-5-RING E3 ubiquitin-protein ligase complex (ECS complex) hijacked by theSIV Vif protein, leading to its degradation (PubMed:36598981).</text>
</comment>
<comment type="miscellaneous">
    <text>Accumulation of APOBEC3G induced non-lethal hypermutation could contribute to the genetic variation of primate lentiviral populations.</text>
</comment>
<comment type="similarity">
    <text evidence="8">Belongs to the cytidine and deoxycytidylate deaminase family.</text>
</comment>
<sequence length="383" mass="45222">MKPHFRNTVEPMDPRTFVSNFNNRPILSGLNTVWLCCEVKTKDPSGPPLDAKIFQGKVYSKAKYHPEMRFLRWFHKWRQLHHDQEYKVTWYVSWSPCTRCANSVATFLAKDPKVTLTIFVARLYYFWKPDYQQALRILCQKRGGPHATMKIMNYNEFQDCWNKFVDGRGKPFKPRNNLPKHYTLLQATLGELLRHLMDPGTFTSNFNNKPWVSGQHETYLCYKVERLHNDTWVPLNQHRGFLRNQAPNIHGFPKGRHAELCFLDLIPFWKLDGQQYRVTCFTSWSPCFSCAQEMAKFISNNEHVSLCIFAARIYDDQGRYQEGLRALHRDGAKIAMMNYSEFEYCWDTFVDRQGRPFQPWDGLDEHSQALSGRLRAILQNQEN</sequence>
<feature type="chain" id="PRO_0000171764" description="DNA dC-&gt;dU-editing enzyme APOBEC-3G">
    <location>
        <begin position="1"/>
        <end position="383"/>
    </location>
</feature>
<feature type="domain" description="CMP/dCMP-type deaminase 1" evidence="2">
    <location>
        <begin position="29"/>
        <end position="138"/>
    </location>
</feature>
<feature type="domain" description="CMP/dCMP-type deaminase 2" evidence="2">
    <location>
        <begin position="214"/>
        <end position="327"/>
    </location>
</feature>
<feature type="region of interest" description="Essential for cytoplasmic localization" evidence="8">
    <location>
        <begin position="1"/>
        <end position="68"/>
    </location>
</feature>
<feature type="region of interest" description="Necessary for homooligomerization" evidence="8">
    <location>
        <begin position="209"/>
        <end position="335"/>
    </location>
</feature>
<feature type="region of interest" description="Interaction with DNA" evidence="8">
    <location>
        <begin position="213"/>
        <end position="215"/>
    </location>
</feature>
<feature type="region of interest" description="Interaction with DNA" evidence="8">
    <location>
        <begin position="312"/>
        <end position="319"/>
    </location>
</feature>
<feature type="active site" description="Proton donor" evidence="2">
    <location>
        <position position="259"/>
    </location>
</feature>
<feature type="binding site" evidence="5 10">
    <location>
        <position position="65"/>
    </location>
    <ligand>
        <name>Zn(2+)</name>
        <dbReference type="ChEBI" id="CHEBI:29105"/>
        <label>1</label>
    </ligand>
</feature>
<feature type="binding site" evidence="5 10">
    <location>
        <position position="97"/>
    </location>
    <ligand>
        <name>Zn(2+)</name>
        <dbReference type="ChEBI" id="CHEBI:29105"/>
        <label>1</label>
    </ligand>
</feature>
<feature type="binding site" evidence="5 10">
    <location>
        <position position="100"/>
    </location>
    <ligand>
        <name>Zn(2+)</name>
        <dbReference type="ChEBI" id="CHEBI:29105"/>
        <label>1</label>
    </ligand>
</feature>
<feature type="binding site" evidence="5 10">
    <location>
        <position position="257"/>
    </location>
    <ligand>
        <name>Zn(2+)</name>
        <dbReference type="ChEBI" id="CHEBI:29105"/>
        <label>2</label>
        <note>catalytic</note>
    </ligand>
</feature>
<feature type="binding site" evidence="5 10">
    <location>
        <position position="287"/>
    </location>
    <ligand>
        <name>Zn(2+)</name>
        <dbReference type="ChEBI" id="CHEBI:29105"/>
        <label>2</label>
        <note>catalytic</note>
    </ligand>
</feature>
<feature type="binding site" evidence="5 10">
    <location>
        <position position="290"/>
    </location>
    <ligand>
        <name>Zn(2+)</name>
        <dbReference type="ChEBI" id="CHEBI:29105"/>
        <label>2</label>
        <note>catalytic</note>
    </ligand>
</feature>
<feature type="site" description="Interaction with DNA" evidence="8">
    <location>
        <position position="244"/>
    </location>
</feature>
<feature type="modified residue" description="Phosphothreonine; by PKA" evidence="1">
    <location>
        <position position="32"/>
    </location>
</feature>
<feature type="modified residue" description="Phosphothreonine; by PKA and CAMK2" evidence="1">
    <location>
        <position position="218"/>
    </location>
</feature>
<feature type="cross-link" description="(Microbial infection) Glycyl lysine isopeptide (Lys-Gly) (interchain with G-Cter in ubiquitin)" evidence="9">
    <location>
        <position position="270"/>
    </location>
</feature>
<feature type="cross-link" description="(Microbial infection) Glycyl lysine isopeptide (Lys-Gly) (interchain with G-Cter in ubiquitin)" evidence="9">
    <location>
        <position position="333"/>
    </location>
</feature>
<feature type="mutagenesis site" description="Renders the protein sensitive to HIV-8 virus." evidence="5">
    <original>K</original>
    <variation>D</variation>
    <location>
        <position position="128"/>
    </location>
</feature>
<feature type="mutagenesis site" description="In 2KR mutant; decreased ubiquitination by SIV Vif protein; when associated with R-333." evidence="5">
    <original>K</original>
    <variation>R</variation>
    <location>
        <position position="270"/>
    </location>
</feature>
<feature type="mutagenesis site" description="In 2KR mutant; decreased ubiquitination by SIV Vif protein; when associated with R-270." evidence="5">
    <original>K</original>
    <variation>R</variation>
    <location>
        <position position="333"/>
    </location>
</feature>
<feature type="helix" evidence="11">
    <location>
        <begin position="5"/>
        <end position="8"/>
    </location>
</feature>
<feature type="helix" evidence="11">
    <location>
        <begin position="14"/>
        <end position="21"/>
    </location>
</feature>
<feature type="strand" evidence="11">
    <location>
        <begin position="32"/>
        <end position="40"/>
    </location>
</feature>
<feature type="strand" evidence="11">
    <location>
        <begin position="49"/>
        <end position="60"/>
    </location>
</feature>
<feature type="helix" evidence="11">
    <location>
        <begin position="62"/>
        <end position="64"/>
    </location>
</feature>
<feature type="helix" evidence="11">
    <location>
        <begin position="66"/>
        <end position="79"/>
    </location>
</feature>
<feature type="strand" evidence="11">
    <location>
        <begin position="86"/>
        <end position="94"/>
    </location>
</feature>
<feature type="helix" evidence="11">
    <location>
        <begin position="98"/>
        <end position="109"/>
    </location>
</feature>
<feature type="strand" evidence="11">
    <location>
        <begin position="114"/>
        <end position="122"/>
    </location>
</feature>
<feature type="turn" evidence="11">
    <location>
        <begin position="124"/>
        <end position="127"/>
    </location>
</feature>
<feature type="helix" evidence="11">
    <location>
        <begin position="129"/>
        <end position="140"/>
    </location>
</feature>
<feature type="strand" evidence="11">
    <location>
        <begin position="148"/>
        <end position="151"/>
    </location>
</feature>
<feature type="helix" evidence="11">
    <location>
        <begin position="154"/>
        <end position="164"/>
    </location>
</feature>
<feature type="helix" evidence="11">
    <location>
        <begin position="178"/>
        <end position="192"/>
    </location>
</feature>
<feature type="helix" evidence="11">
    <location>
        <begin position="199"/>
        <end position="206"/>
    </location>
</feature>
<feature type="strand" evidence="11">
    <location>
        <begin position="219"/>
        <end position="228"/>
    </location>
</feature>
<feature type="strand" evidence="11">
    <location>
        <begin position="231"/>
        <end position="234"/>
    </location>
</feature>
<feature type="strand" evidence="11">
    <location>
        <begin position="236"/>
        <end position="238"/>
    </location>
</feature>
<feature type="strand" evidence="11">
    <location>
        <begin position="240"/>
        <end position="243"/>
    </location>
</feature>
<feature type="helix" evidence="11">
    <location>
        <begin position="258"/>
        <end position="268"/>
    </location>
</feature>
<feature type="strand" evidence="11">
    <location>
        <begin position="276"/>
        <end position="284"/>
    </location>
</feature>
<feature type="helix" evidence="11">
    <location>
        <begin position="288"/>
        <end position="300"/>
    </location>
</feature>
<feature type="strand" evidence="11">
    <location>
        <begin position="304"/>
        <end position="312"/>
    </location>
</feature>
<feature type="strand" evidence="11">
    <location>
        <begin position="317"/>
        <end position="319"/>
    </location>
</feature>
<feature type="helix" evidence="11">
    <location>
        <begin position="320"/>
        <end position="329"/>
    </location>
</feature>
<feature type="strand" evidence="11">
    <location>
        <begin position="333"/>
        <end position="336"/>
    </location>
</feature>
<feature type="helix" evidence="11">
    <location>
        <begin position="339"/>
        <end position="349"/>
    </location>
</feature>
<feature type="helix" evidence="11">
    <location>
        <begin position="363"/>
        <end position="379"/>
    </location>
</feature>
<protein>
    <recommendedName>
        <fullName evidence="1">DNA dC-&gt;dU-editing enzyme APOBEC-3G</fullName>
        <ecNumber evidence="3">3.5.4.38</ecNumber>
    </recommendedName>
    <alternativeName>
        <fullName>Deoxycytidine deaminase</fullName>
    </alternativeName>
</protein>